<reference key="1">
    <citation type="journal article" date="2003" name="Biochem. J.">
        <title>Iron-sulphur cluster assembly in plants: distinct NFU proteins in mitochondria and plastids from Arabidopsis thaliana.</title>
        <authorList>
            <person name="Leon S."/>
            <person name="Touraine B."/>
            <person name="Ribot C."/>
            <person name="Briat J.-F."/>
            <person name="Lobreaux S."/>
        </authorList>
    </citation>
    <scope>NUCLEOTIDE SEQUENCE [MRNA]</scope>
    <scope>TISSUE SPECIFICITY</scope>
    <scope>SUBCELLULAR LOCATION</scope>
    <scope>GENE FAMILY</scope>
    <source>
        <strain>cv. Columbia</strain>
    </source>
</reference>
<reference key="2">
    <citation type="journal article" date="2000" name="DNA Res.">
        <title>Structural analysis of Arabidopsis thaliana chromosome 3. II. Sequence features of the 4,251,695 bp regions covered by 90 P1, TAC and BAC clones.</title>
        <authorList>
            <person name="Kaneko T."/>
            <person name="Katoh T."/>
            <person name="Sato S."/>
            <person name="Nakamura Y."/>
            <person name="Asamizu E."/>
            <person name="Tabata S."/>
        </authorList>
    </citation>
    <scope>NUCLEOTIDE SEQUENCE [LARGE SCALE GENOMIC DNA]</scope>
    <source>
        <strain>cv. Columbia</strain>
    </source>
</reference>
<reference key="3">
    <citation type="journal article" date="2017" name="Plant J.">
        <title>Araport11: a complete reannotation of the Arabidopsis thaliana reference genome.</title>
        <authorList>
            <person name="Cheng C.Y."/>
            <person name="Krishnakumar V."/>
            <person name="Chan A.P."/>
            <person name="Thibaud-Nissen F."/>
            <person name="Schobel S."/>
            <person name="Town C.D."/>
        </authorList>
    </citation>
    <scope>GENOME REANNOTATION</scope>
    <source>
        <strain>cv. Columbia</strain>
    </source>
</reference>
<reference key="4">
    <citation type="journal article" date="2003" name="Science">
        <title>Empirical analysis of transcriptional activity in the Arabidopsis genome.</title>
        <authorList>
            <person name="Yamada K."/>
            <person name="Lim J."/>
            <person name="Dale J.M."/>
            <person name="Chen H."/>
            <person name="Shinn P."/>
            <person name="Palm C.J."/>
            <person name="Southwick A.M."/>
            <person name="Wu H.C."/>
            <person name="Kim C.J."/>
            <person name="Nguyen M."/>
            <person name="Pham P.K."/>
            <person name="Cheuk R.F."/>
            <person name="Karlin-Newmann G."/>
            <person name="Liu S.X."/>
            <person name="Lam B."/>
            <person name="Sakano H."/>
            <person name="Wu T."/>
            <person name="Yu G."/>
            <person name="Miranda M."/>
            <person name="Quach H.L."/>
            <person name="Tripp M."/>
            <person name="Chang C.H."/>
            <person name="Lee J.M."/>
            <person name="Toriumi M.J."/>
            <person name="Chan M.M."/>
            <person name="Tang C.C."/>
            <person name="Onodera C.S."/>
            <person name="Deng J.M."/>
            <person name="Akiyama K."/>
            <person name="Ansari Y."/>
            <person name="Arakawa T."/>
            <person name="Banh J."/>
            <person name="Banno F."/>
            <person name="Bowser L."/>
            <person name="Brooks S.Y."/>
            <person name="Carninci P."/>
            <person name="Chao Q."/>
            <person name="Choy N."/>
            <person name="Enju A."/>
            <person name="Goldsmith A.D."/>
            <person name="Gurjal M."/>
            <person name="Hansen N.F."/>
            <person name="Hayashizaki Y."/>
            <person name="Johnson-Hopson C."/>
            <person name="Hsuan V.W."/>
            <person name="Iida K."/>
            <person name="Karnes M."/>
            <person name="Khan S."/>
            <person name="Koesema E."/>
            <person name="Ishida J."/>
            <person name="Jiang P.X."/>
            <person name="Jones T."/>
            <person name="Kawai J."/>
            <person name="Kamiya A."/>
            <person name="Meyers C."/>
            <person name="Nakajima M."/>
            <person name="Narusaka M."/>
            <person name="Seki M."/>
            <person name="Sakurai T."/>
            <person name="Satou M."/>
            <person name="Tamse R."/>
            <person name="Vaysberg M."/>
            <person name="Wallender E.K."/>
            <person name="Wong C."/>
            <person name="Yamamura Y."/>
            <person name="Yuan S."/>
            <person name="Shinozaki K."/>
            <person name="Davis R.W."/>
            <person name="Theologis A."/>
            <person name="Ecker J.R."/>
        </authorList>
    </citation>
    <scope>NUCLEOTIDE SEQUENCE [LARGE SCALE MRNA]</scope>
    <source>
        <strain>cv. Columbia</strain>
    </source>
</reference>
<dbReference type="EMBL" id="AJ512936">
    <property type="protein sequence ID" value="CAD55561.1"/>
    <property type="molecule type" value="mRNA"/>
</dbReference>
<dbReference type="EMBL" id="AP001304">
    <property type="protein sequence ID" value="BAB01907.1"/>
    <property type="molecule type" value="Genomic_DNA"/>
</dbReference>
<dbReference type="EMBL" id="CP002686">
    <property type="protein sequence ID" value="AEE76448.1"/>
    <property type="molecule type" value="Genomic_DNA"/>
</dbReference>
<dbReference type="EMBL" id="AF370537">
    <property type="protein sequence ID" value="AAK48964.1"/>
    <property type="molecule type" value="mRNA"/>
</dbReference>
<dbReference type="EMBL" id="AY072509">
    <property type="protein sequence ID" value="AAL66924.1"/>
    <property type="molecule type" value="mRNA"/>
</dbReference>
<dbReference type="RefSeq" id="NP_566673.1">
    <molecule id="Q9LIG6-1"/>
    <property type="nucleotide sequence ID" value="NM_112989.3"/>
</dbReference>
<dbReference type="SMR" id="Q9LIG6"/>
<dbReference type="BioGRID" id="6979">
    <property type="interactions" value="2"/>
</dbReference>
<dbReference type="FunCoup" id="Q9LIG6">
    <property type="interactions" value="3390"/>
</dbReference>
<dbReference type="IntAct" id="Q9LIG6">
    <property type="interactions" value="2"/>
</dbReference>
<dbReference type="STRING" id="3702.Q9LIG6"/>
<dbReference type="iPTMnet" id="Q9LIG6"/>
<dbReference type="MetOSite" id="Q9LIG6"/>
<dbReference type="PaxDb" id="3702-AT3G20970.1"/>
<dbReference type="ProteomicsDB" id="251161">
    <molecule id="Q9LIG6-1"/>
</dbReference>
<dbReference type="EnsemblPlants" id="AT3G20970.1">
    <molecule id="Q9LIG6-1"/>
    <property type="protein sequence ID" value="AT3G20970.1"/>
    <property type="gene ID" value="AT3G20970"/>
</dbReference>
<dbReference type="GeneID" id="821647"/>
<dbReference type="Gramene" id="AT3G20970.1">
    <molecule id="Q9LIG6-1"/>
    <property type="protein sequence ID" value="AT3G20970.1"/>
    <property type="gene ID" value="AT3G20970"/>
</dbReference>
<dbReference type="KEGG" id="ath:AT3G20970"/>
<dbReference type="Araport" id="AT3G20970"/>
<dbReference type="TAIR" id="AT3G20970">
    <property type="gene designation" value="NFU4"/>
</dbReference>
<dbReference type="eggNOG" id="KOG2358">
    <property type="taxonomic scope" value="Eukaryota"/>
</dbReference>
<dbReference type="HOGENOM" id="CLU_060555_0_1_1"/>
<dbReference type="InParanoid" id="Q9LIG6"/>
<dbReference type="OMA" id="IFEHIME"/>
<dbReference type="PhylomeDB" id="Q9LIG6"/>
<dbReference type="CD-CODE" id="4299E36E">
    <property type="entry name" value="Nucleolus"/>
</dbReference>
<dbReference type="PRO" id="PR:Q9LIG6"/>
<dbReference type="Proteomes" id="UP000006548">
    <property type="component" value="Chromosome 3"/>
</dbReference>
<dbReference type="ExpressionAtlas" id="Q9LIG6">
    <property type="expression patterns" value="baseline and differential"/>
</dbReference>
<dbReference type="GO" id="GO:0005829">
    <property type="term" value="C:cytosol"/>
    <property type="evidence" value="ECO:0007005"/>
    <property type="project" value="TAIR"/>
</dbReference>
<dbReference type="GO" id="GO:0005739">
    <property type="term" value="C:mitochondrion"/>
    <property type="evidence" value="ECO:0000314"/>
    <property type="project" value="TAIR"/>
</dbReference>
<dbReference type="GO" id="GO:0005506">
    <property type="term" value="F:iron ion binding"/>
    <property type="evidence" value="ECO:0007669"/>
    <property type="project" value="InterPro"/>
</dbReference>
<dbReference type="GO" id="GO:0051536">
    <property type="term" value="F:iron-sulfur cluster binding"/>
    <property type="evidence" value="ECO:0007669"/>
    <property type="project" value="InterPro"/>
</dbReference>
<dbReference type="GO" id="GO:0005198">
    <property type="term" value="F:structural molecule activity"/>
    <property type="evidence" value="ECO:0000304"/>
    <property type="project" value="TAIR"/>
</dbReference>
<dbReference type="GO" id="GO:0016226">
    <property type="term" value="P:iron-sulfur cluster assembly"/>
    <property type="evidence" value="ECO:0007669"/>
    <property type="project" value="InterPro"/>
</dbReference>
<dbReference type="FunFam" id="3.30.300.130:FF:000001">
    <property type="entry name" value="NFU1 iron-sulfur cluster scaffold"/>
    <property type="match status" value="1"/>
</dbReference>
<dbReference type="FunFam" id="3.30.1370.70:FF:000001">
    <property type="entry name" value="NifU-like protein 4, mitochondrial"/>
    <property type="match status" value="1"/>
</dbReference>
<dbReference type="Gene3D" id="3.30.300.130">
    <property type="entry name" value="Fe-S cluster assembly (FSCA)"/>
    <property type="match status" value="1"/>
</dbReference>
<dbReference type="Gene3D" id="3.30.1370.70">
    <property type="entry name" value="Scaffold protein Nfu/NifU, N-terminal domain"/>
    <property type="match status" value="1"/>
</dbReference>
<dbReference type="InterPro" id="IPR034904">
    <property type="entry name" value="FSCA_dom_sf"/>
</dbReference>
<dbReference type="InterPro" id="IPR014824">
    <property type="entry name" value="Nfu/NifU_N"/>
</dbReference>
<dbReference type="InterPro" id="IPR036498">
    <property type="entry name" value="Nfu/NifU_N_sf"/>
</dbReference>
<dbReference type="InterPro" id="IPR001075">
    <property type="entry name" value="NIF_FeS_clus_asmbl_NifU_C"/>
</dbReference>
<dbReference type="PANTHER" id="PTHR11178">
    <property type="entry name" value="IRON-SULFUR CLUSTER SCAFFOLD PROTEIN NFU-RELATED"/>
    <property type="match status" value="1"/>
</dbReference>
<dbReference type="PANTHER" id="PTHR11178:SF1">
    <property type="entry name" value="NFU1 IRON-SULFUR CLUSTER SCAFFOLD HOMOLOG, MITOCHONDRIAL"/>
    <property type="match status" value="1"/>
</dbReference>
<dbReference type="Pfam" id="PF08712">
    <property type="entry name" value="Nfu_N"/>
    <property type="match status" value="1"/>
</dbReference>
<dbReference type="Pfam" id="PF01106">
    <property type="entry name" value="NifU"/>
    <property type="match status" value="1"/>
</dbReference>
<dbReference type="SMART" id="SM00932">
    <property type="entry name" value="Nfu_N"/>
    <property type="match status" value="1"/>
</dbReference>
<dbReference type="SUPFAM" id="SSF117916">
    <property type="entry name" value="Fe-S cluster assembly (FSCA) domain-like"/>
    <property type="match status" value="1"/>
</dbReference>
<dbReference type="SUPFAM" id="SSF110836">
    <property type="entry name" value="Hypothetical protein SAV1430"/>
    <property type="match status" value="1"/>
</dbReference>
<sequence length="283" mass="30504">MKGIARLVTSLSRIGGRKVVSGTSTVTSSSSSSLLLSRRSLFISATNLLNSRTKDSALPSLNSSLLAQKWNFLGGQRRTMFIQTQSTPNPSSLMFYPGKPVMEVGSADFPNVRSALGSPLAKSIYSIDGVVRVFFGSDFVTVTKSDDVSWDILKPEIFAAVMDFYSSGQPLFLDSQAAAAKDTAISEDDSETVAMIKELLETRIRPAVQDDGGDIEYCGFDPESGIVKLRMQGACSGCPSSSVTLKSGIENMLMHYVSEVKGVEQEFDGEDEEGTLSGEMRVE</sequence>
<protein>
    <recommendedName>
        <fullName>NifU-like protein 4, mitochondrial</fullName>
        <shortName>AtNfu-III</shortName>
        <shortName>AtNfu4</shortName>
    </recommendedName>
</protein>
<organism>
    <name type="scientific">Arabidopsis thaliana</name>
    <name type="common">Mouse-ear cress</name>
    <dbReference type="NCBI Taxonomy" id="3702"/>
    <lineage>
        <taxon>Eukaryota</taxon>
        <taxon>Viridiplantae</taxon>
        <taxon>Streptophyta</taxon>
        <taxon>Embryophyta</taxon>
        <taxon>Tracheophyta</taxon>
        <taxon>Spermatophyta</taxon>
        <taxon>Magnoliopsida</taxon>
        <taxon>eudicotyledons</taxon>
        <taxon>Gunneridae</taxon>
        <taxon>Pentapetalae</taxon>
        <taxon>rosids</taxon>
        <taxon>malvids</taxon>
        <taxon>Brassicales</taxon>
        <taxon>Brassicaceae</taxon>
        <taxon>Camelineae</taxon>
        <taxon>Arabidopsis</taxon>
    </lineage>
</organism>
<keyword id="KW-0025">Alternative splicing</keyword>
<keyword id="KW-0496">Mitochondrion</keyword>
<keyword id="KW-1185">Reference proteome</keyword>
<keyword id="KW-0809">Transit peptide</keyword>
<gene>
    <name type="primary">NIFU4</name>
    <name type="synonym">NFU2</name>
    <name type="synonym">NFU4</name>
    <name type="ordered locus">At3g20970</name>
    <name type="ORF">MFD22.10</name>
</gene>
<comment type="function">
    <text evidence="3">Molecular scaffold for [Fe-S] cluster assembly of mitochondrial iron-sulfur proteins.</text>
</comment>
<comment type="subcellular location">
    <subcellularLocation>
        <location evidence="2">Mitochondrion</location>
    </subcellularLocation>
</comment>
<comment type="alternative products">
    <event type="alternative splicing"/>
    <isoform>
        <id>Q9LIG6-1</id>
        <name>1</name>
        <sequence type="displayed"/>
    </isoform>
    <text>A number of isoforms are produced. According to EST sequences.</text>
</comment>
<comment type="tissue specificity">
    <text evidence="2">Predominantly expressed in roots.</text>
</comment>
<comment type="similarity">
    <text evidence="3">Belongs to the NifU family.</text>
</comment>
<accession>Q9LIG6</accession>
<feature type="transit peptide" description="Mitochondrion" evidence="1">
    <location>
        <begin position="1"/>
        <end position="48"/>
    </location>
</feature>
<feature type="chain" id="PRO_0000255238" description="NifU-like protein 4, mitochondrial">
    <location>
        <begin position="49"/>
        <end position="283"/>
    </location>
</feature>
<evidence type="ECO:0000255" key="1"/>
<evidence type="ECO:0000269" key="2">
    <source>
    </source>
</evidence>
<evidence type="ECO:0000305" key="3"/>
<proteinExistence type="evidence at transcript level"/>
<name>NIFU4_ARATH</name>